<organism>
    <name type="scientific">Cereibacter sphaeroides (strain ATCC 17029 / ATH 2.4.9)</name>
    <name type="common">Rhodobacter sphaeroides</name>
    <dbReference type="NCBI Taxonomy" id="349101"/>
    <lineage>
        <taxon>Bacteria</taxon>
        <taxon>Pseudomonadati</taxon>
        <taxon>Pseudomonadota</taxon>
        <taxon>Alphaproteobacteria</taxon>
        <taxon>Rhodobacterales</taxon>
        <taxon>Paracoccaceae</taxon>
        <taxon>Cereibacter</taxon>
    </lineage>
</organism>
<evidence type="ECO:0000255" key="1">
    <source>
        <dbReference type="HAMAP-Rule" id="MF_00652"/>
    </source>
</evidence>
<proteinExistence type="inferred from homology"/>
<dbReference type="EMBL" id="CP000577">
    <property type="protein sequence ID" value="ABN75146.1"/>
    <property type="molecule type" value="Genomic_DNA"/>
</dbReference>
<dbReference type="RefSeq" id="WP_002721945.1">
    <property type="nucleotide sequence ID" value="NC_009049.1"/>
</dbReference>
<dbReference type="SMR" id="A3PFN0"/>
<dbReference type="KEGG" id="rsh:Rsph17029_0026"/>
<dbReference type="HOGENOM" id="CLU_061989_0_0_5"/>
<dbReference type="GO" id="GO:0005829">
    <property type="term" value="C:cytosol"/>
    <property type="evidence" value="ECO:0007669"/>
    <property type="project" value="TreeGrafter"/>
</dbReference>
<dbReference type="GO" id="GO:0033194">
    <property type="term" value="P:response to hydroperoxide"/>
    <property type="evidence" value="ECO:0007669"/>
    <property type="project" value="TreeGrafter"/>
</dbReference>
<dbReference type="HAMAP" id="MF_00652">
    <property type="entry name" value="UPF0246"/>
    <property type="match status" value="1"/>
</dbReference>
<dbReference type="InterPro" id="IPR005583">
    <property type="entry name" value="YaaA"/>
</dbReference>
<dbReference type="NCBIfam" id="NF002542">
    <property type="entry name" value="PRK02101.1-3"/>
    <property type="match status" value="1"/>
</dbReference>
<dbReference type="PANTHER" id="PTHR30283:SF4">
    <property type="entry name" value="PEROXIDE STRESS RESISTANCE PROTEIN YAAA"/>
    <property type="match status" value="1"/>
</dbReference>
<dbReference type="PANTHER" id="PTHR30283">
    <property type="entry name" value="PEROXIDE STRESS RESPONSE PROTEIN YAAA"/>
    <property type="match status" value="1"/>
</dbReference>
<dbReference type="Pfam" id="PF03883">
    <property type="entry name" value="H2O2_YaaD"/>
    <property type="match status" value="1"/>
</dbReference>
<gene>
    <name type="ordered locus">Rsph17029_0026</name>
</gene>
<feature type="chain" id="PRO_1000061628" description="UPF0246 protein Rsph17029_0026">
    <location>
        <begin position="1"/>
        <end position="257"/>
    </location>
</feature>
<comment type="similarity">
    <text evidence="1">Belongs to the UPF0246 family.</text>
</comment>
<name>Y026_CERS1</name>
<accession>A3PFN0</accession>
<reference key="1">
    <citation type="submission" date="2007-02" db="EMBL/GenBank/DDBJ databases">
        <title>Complete sequence of chromosome 1 of Rhodobacter sphaeroides ATCC 17029.</title>
        <authorList>
            <person name="Copeland A."/>
            <person name="Lucas S."/>
            <person name="Lapidus A."/>
            <person name="Barry K."/>
            <person name="Detter J.C."/>
            <person name="Glavina del Rio T."/>
            <person name="Hammon N."/>
            <person name="Israni S."/>
            <person name="Dalin E."/>
            <person name="Tice H."/>
            <person name="Pitluck S."/>
            <person name="Kiss H."/>
            <person name="Brettin T."/>
            <person name="Bruce D."/>
            <person name="Han C."/>
            <person name="Tapia R."/>
            <person name="Gilna P."/>
            <person name="Schmutz J."/>
            <person name="Larimer F."/>
            <person name="Land M."/>
            <person name="Hauser L."/>
            <person name="Kyrpides N."/>
            <person name="Mikhailova N."/>
            <person name="Richardson P."/>
            <person name="Mackenzie C."/>
            <person name="Choudhary M."/>
            <person name="Donohue T.J."/>
            <person name="Kaplan S."/>
        </authorList>
    </citation>
    <scope>NUCLEOTIDE SEQUENCE [LARGE SCALE GENOMIC DNA]</scope>
    <source>
        <strain>ATCC 17029 / ATH 2.4.9</strain>
    </source>
</reference>
<protein>
    <recommendedName>
        <fullName evidence="1">UPF0246 protein Rsph17029_0026</fullName>
    </recommendedName>
</protein>
<sequence>MLAVLSPAKRLAARPALDLPADLAPSEPRLQDQADALARVARDLTAADLRRLMHISEPLARLNVARFAEFHEARNAAVPAVALFDGDTYAGLEARTMDADALRWAQERICILSGLYGLLRPLDRIQPHRLEMGTRLATERGATLYDFWGDRIAEALNARAAETGARVLVNCASVEYFTAADRAALKLPVITPTFLEERNGERKVVSFWAKRARGAMARFIAENRLDDPEDLRAFRAGGYAYEPDLSTDERPVFLRAG</sequence>